<keyword id="KW-0028">Amino-acid biosynthesis</keyword>
<keyword id="KW-0057">Aromatic amino acid biosynthesis</keyword>
<keyword id="KW-0150">Chloroplast</keyword>
<keyword id="KW-0934">Plastid</keyword>
<keyword id="KW-1185">Reference proteome</keyword>
<keyword id="KW-0808">Transferase</keyword>
<keyword id="KW-0809">Transit peptide</keyword>
<protein>
    <recommendedName>
        <fullName>Phospho-2-dehydro-3-deoxyheptonate aldolase 1, chloroplastic</fullName>
        <ecNumber>2.5.1.54</ecNumber>
    </recommendedName>
    <alternativeName>
        <fullName>3-deoxy-D-arabino-heptulosonate 7-phosphate synthase 1</fullName>
    </alternativeName>
    <alternativeName>
        <fullName>DAHP synthase 1</fullName>
    </alternativeName>
    <alternativeName>
        <fullName>Phospho-2-keto-3-deoxyheptonate aldolase 1</fullName>
    </alternativeName>
</protein>
<proteinExistence type="evidence at transcript level"/>
<reference key="1">
    <citation type="submission" date="2003-10" db="EMBL/GenBank/DDBJ databases">
        <title>The cDNA encoding 3-deoxy-D-arabino heptulosonate-7-phosphate synthase expressed in rice stem.</title>
        <authorList>
            <person name="Mase K."/>
            <person name="Nishikubo N."/>
            <person name="Satou K."/>
            <person name="Nakano Y."/>
            <person name="Kajita S."/>
            <person name="Katayama Y."/>
        </authorList>
    </citation>
    <scope>NUCLEOTIDE SEQUENCE [MRNA]</scope>
    <source>
        <strain>cv. Fujiminori</strain>
    </source>
</reference>
<reference key="2">
    <citation type="submission" date="2003-10" db="EMBL/GenBank/DDBJ databases">
        <title>The gene encoding 3-deoxy-D-arabino heptulosonate-7-phosphate synthase expressed in rice stem.</title>
        <authorList>
            <person name="Mase K."/>
            <person name="Nishikubo N."/>
            <person name="Satou K."/>
            <person name="Nakano Y."/>
            <person name="Kajita S."/>
            <person name="Katayama Y."/>
        </authorList>
    </citation>
    <scope>NUCLEOTIDE SEQUENCE [GENOMIC DNA]</scope>
    <source>
        <strain>cv. Fujiminori</strain>
    </source>
</reference>
<reference key="3">
    <citation type="journal article" date="2005" name="Genome Res.">
        <title>Sequence, annotation, and analysis of synteny between rice chromosome 3 and diverged grass species.</title>
        <authorList>
            <consortium name="The rice chromosome 3 sequencing consortium"/>
            <person name="Buell C.R."/>
            <person name="Yuan Q."/>
            <person name="Ouyang S."/>
            <person name="Liu J."/>
            <person name="Zhu W."/>
            <person name="Wang A."/>
            <person name="Maiti R."/>
            <person name="Haas B."/>
            <person name="Wortman J."/>
            <person name="Pertea M."/>
            <person name="Jones K.M."/>
            <person name="Kim M."/>
            <person name="Overton L."/>
            <person name="Tsitrin T."/>
            <person name="Fadrosh D."/>
            <person name="Bera J."/>
            <person name="Weaver B."/>
            <person name="Jin S."/>
            <person name="Johri S."/>
            <person name="Reardon M."/>
            <person name="Webb K."/>
            <person name="Hill J."/>
            <person name="Moffat K."/>
            <person name="Tallon L."/>
            <person name="Van Aken S."/>
            <person name="Lewis M."/>
            <person name="Utterback T."/>
            <person name="Feldblyum T."/>
            <person name="Zismann V."/>
            <person name="Iobst S."/>
            <person name="Hsiao J."/>
            <person name="de Vazeille A.R."/>
            <person name="Salzberg S.L."/>
            <person name="White O."/>
            <person name="Fraser C.M."/>
            <person name="Yu Y."/>
            <person name="Kim H."/>
            <person name="Rambo T."/>
            <person name="Currie J."/>
            <person name="Collura K."/>
            <person name="Kernodle-Thompson S."/>
            <person name="Wei F."/>
            <person name="Kudrna K."/>
            <person name="Ammiraju J.S.S."/>
            <person name="Luo M."/>
            <person name="Goicoechea J.L."/>
            <person name="Wing R.A."/>
            <person name="Henry D."/>
            <person name="Oates R."/>
            <person name="Palmer M."/>
            <person name="Pries G."/>
            <person name="Saski C."/>
            <person name="Simmons J."/>
            <person name="Soderlund C."/>
            <person name="Nelson W."/>
            <person name="de la Bastide M."/>
            <person name="Spiegel L."/>
            <person name="Nascimento L."/>
            <person name="Huang E."/>
            <person name="Preston R."/>
            <person name="Zutavern T."/>
            <person name="Palmer L."/>
            <person name="O'Shaughnessy A."/>
            <person name="Dike S."/>
            <person name="McCombie W.R."/>
            <person name="Minx P."/>
            <person name="Cordum H."/>
            <person name="Wilson R."/>
            <person name="Jin W."/>
            <person name="Lee H.R."/>
            <person name="Jiang J."/>
            <person name="Jackson S."/>
        </authorList>
    </citation>
    <scope>NUCLEOTIDE SEQUENCE [LARGE SCALE GENOMIC DNA]</scope>
    <source>
        <strain>cv. Nipponbare</strain>
    </source>
</reference>
<reference key="4">
    <citation type="journal article" date="2005" name="Nature">
        <title>The map-based sequence of the rice genome.</title>
        <authorList>
            <consortium name="International rice genome sequencing project (IRGSP)"/>
        </authorList>
    </citation>
    <scope>NUCLEOTIDE SEQUENCE [LARGE SCALE GENOMIC DNA]</scope>
    <source>
        <strain>cv. Nipponbare</strain>
    </source>
</reference>
<reference key="5">
    <citation type="journal article" date="2013" name="Rice">
        <title>Improvement of the Oryza sativa Nipponbare reference genome using next generation sequence and optical map data.</title>
        <authorList>
            <person name="Kawahara Y."/>
            <person name="de la Bastide M."/>
            <person name="Hamilton J.P."/>
            <person name="Kanamori H."/>
            <person name="McCombie W.R."/>
            <person name="Ouyang S."/>
            <person name="Schwartz D.C."/>
            <person name="Tanaka T."/>
            <person name="Wu J."/>
            <person name="Zhou S."/>
            <person name="Childs K.L."/>
            <person name="Davidson R.M."/>
            <person name="Lin H."/>
            <person name="Quesada-Ocampo L."/>
            <person name="Vaillancourt B."/>
            <person name="Sakai H."/>
            <person name="Lee S.S."/>
            <person name="Kim J."/>
            <person name="Numa H."/>
            <person name="Itoh T."/>
            <person name="Buell C.R."/>
            <person name="Matsumoto T."/>
        </authorList>
    </citation>
    <scope>GENOME REANNOTATION</scope>
    <source>
        <strain>cv. Nipponbare</strain>
    </source>
</reference>
<name>AROF_ORYSJ</name>
<organism>
    <name type="scientific">Oryza sativa subsp. japonica</name>
    <name type="common">Rice</name>
    <dbReference type="NCBI Taxonomy" id="39947"/>
    <lineage>
        <taxon>Eukaryota</taxon>
        <taxon>Viridiplantae</taxon>
        <taxon>Streptophyta</taxon>
        <taxon>Embryophyta</taxon>
        <taxon>Tracheophyta</taxon>
        <taxon>Spermatophyta</taxon>
        <taxon>Magnoliopsida</taxon>
        <taxon>Liliopsida</taxon>
        <taxon>Poales</taxon>
        <taxon>Poaceae</taxon>
        <taxon>BOP clade</taxon>
        <taxon>Oryzoideae</taxon>
        <taxon>Oryzeae</taxon>
        <taxon>Oryzinae</taxon>
        <taxon>Oryza</taxon>
        <taxon>Oryza sativa</taxon>
    </lineage>
</organism>
<evidence type="ECO:0000255" key="1"/>
<evidence type="ECO:0000256" key="2">
    <source>
        <dbReference type="SAM" id="MobiDB-lite"/>
    </source>
</evidence>
<evidence type="ECO:0000305" key="3"/>
<comment type="catalytic activity">
    <reaction>
        <text>D-erythrose 4-phosphate + phosphoenolpyruvate + H2O = 7-phospho-2-dehydro-3-deoxy-D-arabino-heptonate + phosphate</text>
        <dbReference type="Rhea" id="RHEA:14717"/>
        <dbReference type="ChEBI" id="CHEBI:15377"/>
        <dbReference type="ChEBI" id="CHEBI:16897"/>
        <dbReference type="ChEBI" id="CHEBI:43474"/>
        <dbReference type="ChEBI" id="CHEBI:58394"/>
        <dbReference type="ChEBI" id="CHEBI:58702"/>
        <dbReference type="EC" id="2.5.1.54"/>
    </reaction>
</comment>
<comment type="pathway">
    <text>Metabolic intermediate biosynthesis; chorismate biosynthesis; chorismate from D-erythrose 4-phosphate and phosphoenolpyruvate: step 1/7.</text>
</comment>
<comment type="subcellular location">
    <subcellularLocation>
        <location evidence="3">Plastid</location>
        <location evidence="3">Chloroplast</location>
    </subcellularLocation>
</comment>
<comment type="similarity">
    <text evidence="3">Belongs to the class-II DAHP synthase family.</text>
</comment>
<comment type="sequence caution" evidence="3">
    <conflict type="erroneous gene model prediction">
        <sequence resource="EMBL-CDS" id="AAR06362"/>
    </conflict>
</comment>
<comment type="sequence caution" evidence="3">
    <conflict type="frameshift">
        <sequence resource="EMBL-CDS" id="BAD14924"/>
    </conflict>
</comment>
<comment type="sequence caution" evidence="3">
    <conflict type="frameshift">
        <sequence resource="EMBL-CDS" id="BAD14927"/>
    </conflict>
</comment>
<gene>
    <name type="primary">DAHPS1</name>
    <name type="ordered locus">Os03g0389700</name>
    <name type="ordered locus">LOC_Os03g27230</name>
    <name type="ORF">OSJNBa0017N12.13</name>
</gene>
<accession>Q75LR2</accession>
<accession>Q75W15</accession>
<sequence length="554" mass="60490">MSLATSSSMAGGAAVVPRSATATTASAFVTMKRRATAVRAVHAAEPSKNPPVGVPSAAKTSSPSVAAPEKAPVAAAPAPVAPAPAATKQVAPARWAVDSWRTKKALQLPEYPNAAELEAVLKTIEAFPPIVFAGEARHLEERLADAAMGRAFLLQGGDCAESFKEFNGNNIRDTFRVLLQMSAVLTFGGQMPVIKVGRMAGQFAKPRSEAFEERDGVKLPSYRGDNINGDAFNEKSRIPDPQRMVRAYAQSAATLNLLRAFATGGYAAMQRVTQWNLDFTQHSEQGDRYRELAHRVDEALGFMSAAGLTVDHPLMTSTDFWTSHECLLLPYEQSLTRQDSTTGHFYDCSAHMLWVGERTRQLDGAHVEFLRGVANPLGIKVSDKMNPTELVKLIEILNPSNKPGRITIITRMGAENMRVKLPHLIRAVRHAGQIVTWITDPMHGNTIKAPCGLKTRPFDSIAEVRAFFDVHDQEGSHPGGVHLEMTGQNVTECIGGSRTVTFDDLGDRYHTHCDPRLNASQSLELSFIIAERLRRKRIRSSKLNNMLPLPPFGV</sequence>
<dbReference type="EC" id="2.5.1.54"/>
<dbReference type="EMBL" id="AB122057">
    <property type="protein sequence ID" value="BAD14924.1"/>
    <property type="status" value="ALT_FRAME"/>
    <property type="molecule type" value="mRNA"/>
</dbReference>
<dbReference type="EMBL" id="AB122083">
    <property type="protein sequence ID" value="BAD14927.1"/>
    <property type="status" value="ALT_FRAME"/>
    <property type="molecule type" value="Genomic_DNA"/>
</dbReference>
<dbReference type="EMBL" id="AC092075">
    <property type="protein sequence ID" value="AAR06362.1"/>
    <property type="status" value="ALT_SEQ"/>
    <property type="molecule type" value="Genomic_DNA"/>
</dbReference>
<dbReference type="EMBL" id="AP014959">
    <property type="status" value="NOT_ANNOTATED_CDS"/>
    <property type="molecule type" value="Genomic_DNA"/>
</dbReference>
<dbReference type="RefSeq" id="XP_015630375.1">
    <property type="nucleotide sequence ID" value="XM_015774889.1"/>
</dbReference>
<dbReference type="SMR" id="Q75LR2"/>
<dbReference type="FunCoup" id="Q75LR2">
    <property type="interactions" value="1464"/>
</dbReference>
<dbReference type="STRING" id="39947.Q75LR2"/>
<dbReference type="PaxDb" id="39947-Q75LR2"/>
<dbReference type="eggNOG" id="ENOG502QPP7">
    <property type="taxonomic scope" value="Eukaryota"/>
</dbReference>
<dbReference type="HOGENOM" id="CLU_026885_3_0_1"/>
<dbReference type="InParanoid" id="Q75LR2"/>
<dbReference type="OrthoDB" id="2338at2759"/>
<dbReference type="PlantReactome" id="R-OSA-1119430">
    <property type="pathway name" value="Chorismate biosynthesis"/>
</dbReference>
<dbReference type="UniPathway" id="UPA00053">
    <property type="reaction ID" value="UER00084"/>
</dbReference>
<dbReference type="Proteomes" id="UP000000763">
    <property type="component" value="Chromosome 3"/>
</dbReference>
<dbReference type="Proteomes" id="UP000059680">
    <property type="component" value="Chromosome 3"/>
</dbReference>
<dbReference type="GO" id="GO:0009507">
    <property type="term" value="C:chloroplast"/>
    <property type="evidence" value="ECO:0007669"/>
    <property type="project" value="UniProtKB-SubCell"/>
</dbReference>
<dbReference type="GO" id="GO:0003849">
    <property type="term" value="F:3-deoxy-7-phosphoheptulonate synthase activity"/>
    <property type="evidence" value="ECO:0007669"/>
    <property type="project" value="UniProtKB-EC"/>
</dbReference>
<dbReference type="GO" id="GO:0008652">
    <property type="term" value="P:amino acid biosynthetic process"/>
    <property type="evidence" value="ECO:0007669"/>
    <property type="project" value="UniProtKB-KW"/>
</dbReference>
<dbReference type="GO" id="GO:0009073">
    <property type="term" value="P:aromatic amino acid family biosynthetic process"/>
    <property type="evidence" value="ECO:0007669"/>
    <property type="project" value="UniProtKB-KW"/>
</dbReference>
<dbReference type="GO" id="GO:0009423">
    <property type="term" value="P:chorismate biosynthetic process"/>
    <property type="evidence" value="ECO:0007669"/>
    <property type="project" value="UniProtKB-UniPathway"/>
</dbReference>
<dbReference type="FunFam" id="3.20.20.70:FF:000128">
    <property type="entry name" value="Phospho-2-dehydro-3-deoxyheptonate aldolase"/>
    <property type="match status" value="1"/>
</dbReference>
<dbReference type="Gene3D" id="3.20.20.70">
    <property type="entry name" value="Aldolase class I"/>
    <property type="match status" value="2"/>
</dbReference>
<dbReference type="InterPro" id="IPR013785">
    <property type="entry name" value="Aldolase_TIM"/>
</dbReference>
<dbReference type="InterPro" id="IPR002480">
    <property type="entry name" value="DAHP_synth_2"/>
</dbReference>
<dbReference type="NCBIfam" id="TIGR01358">
    <property type="entry name" value="DAHP_synth_II"/>
    <property type="match status" value="1"/>
</dbReference>
<dbReference type="PANTHER" id="PTHR21337:SF0">
    <property type="entry name" value="PHOSPHO-2-DEHYDRO-3-DEOXYHEPTONATE ALDOLASE"/>
    <property type="match status" value="1"/>
</dbReference>
<dbReference type="PANTHER" id="PTHR21337">
    <property type="entry name" value="PHOSPHO-2-DEHYDRO-3-DEOXYHEPTONATE ALDOLASE 1, 2"/>
    <property type="match status" value="1"/>
</dbReference>
<dbReference type="Pfam" id="PF01474">
    <property type="entry name" value="DAHP_synth_2"/>
    <property type="match status" value="1"/>
</dbReference>
<dbReference type="SUPFAM" id="SSF51569">
    <property type="entry name" value="Aldolase"/>
    <property type="match status" value="1"/>
</dbReference>
<feature type="transit peptide" description="Chloroplast" evidence="1">
    <location>
        <begin position="1"/>
        <end position="39"/>
    </location>
</feature>
<feature type="chain" id="PRO_0000247310" description="Phospho-2-dehydro-3-deoxyheptonate aldolase 1, chloroplastic">
    <location>
        <begin position="40"/>
        <end position="554"/>
    </location>
</feature>
<feature type="region of interest" description="Disordered" evidence="2">
    <location>
        <begin position="41"/>
        <end position="70"/>
    </location>
</feature>